<gene>
    <name type="primary">dctA</name>
    <name type="ordered locus">XF_0976</name>
</gene>
<accession>Q9PEQ2</accession>
<comment type="function">
    <text evidence="1">Responsible for the transport of dicarboxylates such as succinate, fumarate, and malate from the periplasm across the inner membrane.</text>
</comment>
<comment type="subcellular location">
    <subcellularLocation>
        <location evidence="1">Cell inner membrane</location>
        <topology evidence="1">Multi-pass membrane protein</topology>
    </subcellularLocation>
</comment>
<comment type="similarity">
    <text evidence="3">Belongs to the dicarboxylate/amino acid:cation symporter (DAACS) (TC 2.A.23) family.</text>
</comment>
<comment type="sequence caution" evidence="3">
    <conflict type="erroneous initiation">
        <sequence resource="EMBL-CDS" id="AAF83786"/>
    </conflict>
</comment>
<proteinExistence type="inferred from homology"/>
<evidence type="ECO:0000250" key="1"/>
<evidence type="ECO:0000255" key="2"/>
<evidence type="ECO:0000305" key="3"/>
<sequence length="449" mass="47938">MHLSSRANAPAPHKPYNPFYLQLYFWVIIAIILGALLGHCYPVVGQQLKPLGDAFIKLVKMIISPVIFLTIVTGIASVAHVGTVARVFGKAMVYFLFFSTLALLLGLVVAHVVHPGVGMNINPADLHQGEIASYVEKSHDLTLVGFLMDIIPKTLLSPFVGDNILQVLFVAVLFGIALALAGERGKPVLNLLDALTLPVFKLVQMLMKMAPIGAFGAIAFTIGKYGVDSLVNLGWLVGSFYLTSLLFVLVILGAVSWFSGFSILKLIRYLKSELLLVLGTSSSEAALPSLMEKMVQAGCKKSVVGLVVPTGYSFNLDGTNIYMTLAALFIAQATNTELTPAHQLALFLVAMLSSKGAAGVSGAGFITLAATLTVVPEVPIAGMALILGVDRFMSECRSLTNFIGNAVATLVVSRWENALNHEQLKIALDGSEPAYQSLHAKDAEPSVSR</sequence>
<name>DCTA_XYLFA</name>
<protein>
    <recommendedName>
        <fullName>C4-dicarboxylate transport protein</fullName>
    </recommendedName>
</protein>
<feature type="chain" id="PRO_0000202115" description="C4-dicarboxylate transport protein">
    <location>
        <begin position="1"/>
        <end position="449"/>
    </location>
</feature>
<feature type="transmembrane region" description="Helical" evidence="2">
    <location>
        <begin position="20"/>
        <end position="42"/>
    </location>
</feature>
<feature type="transmembrane region" description="Helical" evidence="2">
    <location>
        <begin position="62"/>
        <end position="84"/>
    </location>
</feature>
<feature type="transmembrane region" description="Helical" evidence="2">
    <location>
        <begin position="91"/>
        <end position="113"/>
    </location>
</feature>
<feature type="transmembrane region" description="Helical" evidence="2">
    <location>
        <begin position="164"/>
        <end position="181"/>
    </location>
</feature>
<feature type="transmembrane region" description="Helical" evidence="2">
    <location>
        <begin position="202"/>
        <end position="224"/>
    </location>
</feature>
<feature type="transmembrane region" description="Helical" evidence="2">
    <location>
        <begin position="239"/>
        <end position="261"/>
    </location>
</feature>
<feature type="transmembrane region" description="Helical" evidence="2">
    <location>
        <begin position="344"/>
        <end position="366"/>
    </location>
</feature>
<feature type="transmembrane region" description="Helical" evidence="2">
    <location>
        <begin position="370"/>
        <end position="389"/>
    </location>
</feature>
<keyword id="KW-0997">Cell inner membrane</keyword>
<keyword id="KW-1003">Cell membrane</keyword>
<keyword id="KW-0472">Membrane</keyword>
<keyword id="KW-0769">Symport</keyword>
<keyword id="KW-0812">Transmembrane</keyword>
<keyword id="KW-1133">Transmembrane helix</keyword>
<keyword id="KW-0813">Transport</keyword>
<dbReference type="EMBL" id="AE003849">
    <property type="protein sequence ID" value="AAF83786.1"/>
    <property type="status" value="ALT_INIT"/>
    <property type="molecule type" value="Genomic_DNA"/>
</dbReference>
<dbReference type="PIR" id="E82740">
    <property type="entry name" value="E82740"/>
</dbReference>
<dbReference type="RefSeq" id="WP_031337995.1">
    <property type="nucleotide sequence ID" value="NC_002488.3"/>
</dbReference>
<dbReference type="SMR" id="Q9PEQ2"/>
<dbReference type="STRING" id="160492.XF_0976"/>
<dbReference type="KEGG" id="xfa:XF_0976"/>
<dbReference type="eggNOG" id="COG1301">
    <property type="taxonomic scope" value="Bacteria"/>
</dbReference>
<dbReference type="HOGENOM" id="CLU_019375_7_0_6"/>
<dbReference type="Proteomes" id="UP000000812">
    <property type="component" value="Chromosome"/>
</dbReference>
<dbReference type="GO" id="GO:0005886">
    <property type="term" value="C:plasma membrane"/>
    <property type="evidence" value="ECO:0007669"/>
    <property type="project" value="UniProtKB-SubCell"/>
</dbReference>
<dbReference type="GO" id="GO:0015138">
    <property type="term" value="F:fumarate transmembrane transporter activity"/>
    <property type="evidence" value="ECO:0007669"/>
    <property type="project" value="TreeGrafter"/>
</dbReference>
<dbReference type="GO" id="GO:0015366">
    <property type="term" value="F:malate:proton symporter activity"/>
    <property type="evidence" value="ECO:0007669"/>
    <property type="project" value="TreeGrafter"/>
</dbReference>
<dbReference type="GO" id="GO:0015141">
    <property type="term" value="F:succinate transmembrane transporter activity"/>
    <property type="evidence" value="ECO:0007669"/>
    <property type="project" value="TreeGrafter"/>
</dbReference>
<dbReference type="GO" id="GO:0070778">
    <property type="term" value="P:L-aspartate transmembrane transport"/>
    <property type="evidence" value="ECO:0007669"/>
    <property type="project" value="TreeGrafter"/>
</dbReference>
<dbReference type="FunFam" id="1.10.3860.10:FF:000001">
    <property type="entry name" value="C4-dicarboxylate transport protein"/>
    <property type="match status" value="1"/>
</dbReference>
<dbReference type="Gene3D" id="1.10.3860.10">
    <property type="entry name" value="Sodium:dicarboxylate symporter"/>
    <property type="match status" value="1"/>
</dbReference>
<dbReference type="HAMAP" id="MF_01300">
    <property type="entry name" value="C4_dicarb_transport"/>
    <property type="match status" value="1"/>
</dbReference>
<dbReference type="InterPro" id="IPR023954">
    <property type="entry name" value="C4_dicarb_transport"/>
</dbReference>
<dbReference type="InterPro" id="IPR001991">
    <property type="entry name" value="Na-dicarboxylate_symporter"/>
</dbReference>
<dbReference type="InterPro" id="IPR018107">
    <property type="entry name" value="Na-dicarboxylate_symporter_CS"/>
</dbReference>
<dbReference type="InterPro" id="IPR036458">
    <property type="entry name" value="Na:dicarbo_symporter_sf"/>
</dbReference>
<dbReference type="NCBIfam" id="NF002461">
    <property type="entry name" value="PRK01663.1"/>
    <property type="match status" value="1"/>
</dbReference>
<dbReference type="PANTHER" id="PTHR42865:SF1">
    <property type="entry name" value="AEROBIC C4-DICARBOXYLATE TRANSPORT PROTEIN"/>
    <property type="match status" value="1"/>
</dbReference>
<dbReference type="PANTHER" id="PTHR42865">
    <property type="entry name" value="PROTON/GLUTAMATE-ASPARTATE SYMPORTER"/>
    <property type="match status" value="1"/>
</dbReference>
<dbReference type="Pfam" id="PF00375">
    <property type="entry name" value="SDF"/>
    <property type="match status" value="1"/>
</dbReference>
<dbReference type="PRINTS" id="PR00173">
    <property type="entry name" value="EDTRNSPORT"/>
</dbReference>
<dbReference type="SUPFAM" id="SSF118215">
    <property type="entry name" value="Proton glutamate symport protein"/>
    <property type="match status" value="1"/>
</dbReference>
<dbReference type="PROSITE" id="PS00713">
    <property type="entry name" value="NA_DICARBOXYL_SYMP_1"/>
    <property type="match status" value="1"/>
</dbReference>
<dbReference type="PROSITE" id="PS00714">
    <property type="entry name" value="NA_DICARBOXYL_SYMP_2"/>
    <property type="match status" value="1"/>
</dbReference>
<reference key="1">
    <citation type="journal article" date="2000" name="Nature">
        <title>The genome sequence of the plant pathogen Xylella fastidiosa.</title>
        <authorList>
            <person name="Simpson A.J.G."/>
            <person name="Reinach F.C."/>
            <person name="Arruda P."/>
            <person name="Abreu F.A."/>
            <person name="Acencio M."/>
            <person name="Alvarenga R."/>
            <person name="Alves L.M.C."/>
            <person name="Araya J.E."/>
            <person name="Baia G.S."/>
            <person name="Baptista C.S."/>
            <person name="Barros M.H."/>
            <person name="Bonaccorsi E.D."/>
            <person name="Bordin S."/>
            <person name="Bove J.M."/>
            <person name="Briones M.R.S."/>
            <person name="Bueno M.R.P."/>
            <person name="Camargo A.A."/>
            <person name="Camargo L.E.A."/>
            <person name="Carraro D.M."/>
            <person name="Carrer H."/>
            <person name="Colauto N.B."/>
            <person name="Colombo C."/>
            <person name="Costa F.F."/>
            <person name="Costa M.C.R."/>
            <person name="Costa-Neto C.M."/>
            <person name="Coutinho L.L."/>
            <person name="Cristofani M."/>
            <person name="Dias-Neto E."/>
            <person name="Docena C."/>
            <person name="El-Dorry H."/>
            <person name="Facincani A.P."/>
            <person name="Ferreira A.J.S."/>
            <person name="Ferreira V.C.A."/>
            <person name="Ferro J.A."/>
            <person name="Fraga J.S."/>
            <person name="Franca S.C."/>
            <person name="Franco M.C."/>
            <person name="Frohme M."/>
            <person name="Furlan L.R."/>
            <person name="Garnier M."/>
            <person name="Goldman G.H."/>
            <person name="Goldman M.H.S."/>
            <person name="Gomes S.L."/>
            <person name="Gruber A."/>
            <person name="Ho P.L."/>
            <person name="Hoheisel J.D."/>
            <person name="Junqueira M.L."/>
            <person name="Kemper E.L."/>
            <person name="Kitajima J.P."/>
            <person name="Krieger J.E."/>
            <person name="Kuramae E.E."/>
            <person name="Laigret F."/>
            <person name="Lambais M.R."/>
            <person name="Leite L.C.C."/>
            <person name="Lemos E.G.M."/>
            <person name="Lemos M.V.F."/>
            <person name="Lopes S.A."/>
            <person name="Lopes C.R."/>
            <person name="Machado J.A."/>
            <person name="Machado M.A."/>
            <person name="Madeira A.M.B.N."/>
            <person name="Madeira H.M.F."/>
            <person name="Marino C.L."/>
            <person name="Marques M.V."/>
            <person name="Martins E.A.L."/>
            <person name="Martins E.M.F."/>
            <person name="Matsukuma A.Y."/>
            <person name="Menck C.F.M."/>
            <person name="Miracca E.C."/>
            <person name="Miyaki C.Y."/>
            <person name="Monteiro-Vitorello C.B."/>
            <person name="Moon D.H."/>
            <person name="Nagai M.A."/>
            <person name="Nascimento A.L.T.O."/>
            <person name="Netto L.E.S."/>
            <person name="Nhani A. Jr."/>
            <person name="Nobrega F.G."/>
            <person name="Nunes L.R."/>
            <person name="Oliveira M.A."/>
            <person name="de Oliveira M.C."/>
            <person name="de Oliveira R.C."/>
            <person name="Palmieri D.A."/>
            <person name="Paris A."/>
            <person name="Peixoto B.R."/>
            <person name="Pereira G.A.G."/>
            <person name="Pereira H.A. Jr."/>
            <person name="Pesquero J.B."/>
            <person name="Quaggio R.B."/>
            <person name="Roberto P.G."/>
            <person name="Rodrigues V."/>
            <person name="de Rosa A.J.M."/>
            <person name="de Rosa V.E. Jr."/>
            <person name="de Sa R.G."/>
            <person name="Santelli R.V."/>
            <person name="Sawasaki H.E."/>
            <person name="da Silva A.C.R."/>
            <person name="da Silva A.M."/>
            <person name="da Silva F.R."/>
            <person name="Silva W.A. Jr."/>
            <person name="da Silveira J.F."/>
            <person name="Silvestri M.L.Z."/>
            <person name="Siqueira W.J."/>
            <person name="de Souza A.A."/>
            <person name="de Souza A.P."/>
            <person name="Terenzi M.F."/>
            <person name="Truffi D."/>
            <person name="Tsai S.M."/>
            <person name="Tsuhako M.H."/>
            <person name="Vallada H."/>
            <person name="Van Sluys M.A."/>
            <person name="Verjovski-Almeida S."/>
            <person name="Vettore A.L."/>
            <person name="Zago M.A."/>
            <person name="Zatz M."/>
            <person name="Meidanis J."/>
            <person name="Setubal J.C."/>
        </authorList>
    </citation>
    <scope>NUCLEOTIDE SEQUENCE [LARGE SCALE GENOMIC DNA]</scope>
    <source>
        <strain>9a5c</strain>
    </source>
</reference>
<organism>
    <name type="scientific">Xylella fastidiosa (strain 9a5c)</name>
    <dbReference type="NCBI Taxonomy" id="160492"/>
    <lineage>
        <taxon>Bacteria</taxon>
        <taxon>Pseudomonadati</taxon>
        <taxon>Pseudomonadota</taxon>
        <taxon>Gammaproteobacteria</taxon>
        <taxon>Lysobacterales</taxon>
        <taxon>Lysobacteraceae</taxon>
        <taxon>Xylella</taxon>
    </lineage>
</organism>